<accession>Q87L01</accession>
<proteinExistence type="inferred from homology"/>
<reference key="1">
    <citation type="journal article" date="2003" name="Lancet">
        <title>Genome sequence of Vibrio parahaemolyticus: a pathogenic mechanism distinct from that of V. cholerae.</title>
        <authorList>
            <person name="Makino K."/>
            <person name="Oshima K."/>
            <person name="Kurokawa K."/>
            <person name="Yokoyama K."/>
            <person name="Uda T."/>
            <person name="Tagomori K."/>
            <person name="Iijima Y."/>
            <person name="Najima M."/>
            <person name="Nakano M."/>
            <person name="Yamashita A."/>
            <person name="Kubota Y."/>
            <person name="Kimura S."/>
            <person name="Yasunaga T."/>
            <person name="Honda T."/>
            <person name="Shinagawa H."/>
            <person name="Hattori M."/>
            <person name="Iida T."/>
        </authorList>
    </citation>
    <scope>NUCLEOTIDE SEQUENCE [LARGE SCALE GENOMIC DNA]</scope>
    <source>
        <strain>RIMD 2210633</strain>
    </source>
</reference>
<protein>
    <recommendedName>
        <fullName evidence="1">Oligoribonuclease</fullName>
        <ecNumber evidence="1">3.1.15.-</ecNumber>
    </recommendedName>
</protein>
<dbReference type="EC" id="3.1.15.-" evidence="1"/>
<dbReference type="EMBL" id="BA000031">
    <property type="protein sequence ID" value="BAC61086.1"/>
    <property type="molecule type" value="Genomic_DNA"/>
</dbReference>
<dbReference type="RefSeq" id="NP_799202.1">
    <property type="nucleotide sequence ID" value="NC_004603.1"/>
</dbReference>
<dbReference type="RefSeq" id="WP_005456987.1">
    <property type="nucleotide sequence ID" value="NC_004603.1"/>
</dbReference>
<dbReference type="SMR" id="Q87L01"/>
<dbReference type="GeneID" id="1190386"/>
<dbReference type="KEGG" id="vpa:VP2823"/>
<dbReference type="PATRIC" id="fig|223926.6.peg.2714"/>
<dbReference type="eggNOG" id="COG1949">
    <property type="taxonomic scope" value="Bacteria"/>
</dbReference>
<dbReference type="HOGENOM" id="CLU_064761_2_0_6"/>
<dbReference type="Proteomes" id="UP000002493">
    <property type="component" value="Chromosome 1"/>
</dbReference>
<dbReference type="GO" id="GO:0005737">
    <property type="term" value="C:cytoplasm"/>
    <property type="evidence" value="ECO:0007669"/>
    <property type="project" value="UniProtKB-SubCell"/>
</dbReference>
<dbReference type="GO" id="GO:0000175">
    <property type="term" value="F:3'-5'-RNA exonuclease activity"/>
    <property type="evidence" value="ECO:0007669"/>
    <property type="project" value="InterPro"/>
</dbReference>
<dbReference type="GO" id="GO:0003676">
    <property type="term" value="F:nucleic acid binding"/>
    <property type="evidence" value="ECO:0007669"/>
    <property type="project" value="InterPro"/>
</dbReference>
<dbReference type="GO" id="GO:0006259">
    <property type="term" value="P:DNA metabolic process"/>
    <property type="evidence" value="ECO:0007669"/>
    <property type="project" value="UniProtKB-ARBA"/>
</dbReference>
<dbReference type="CDD" id="cd06135">
    <property type="entry name" value="Orn"/>
    <property type="match status" value="1"/>
</dbReference>
<dbReference type="FunFam" id="3.30.420.10:FF:000003">
    <property type="entry name" value="Oligoribonuclease"/>
    <property type="match status" value="1"/>
</dbReference>
<dbReference type="Gene3D" id="3.30.420.10">
    <property type="entry name" value="Ribonuclease H-like superfamily/Ribonuclease H"/>
    <property type="match status" value="1"/>
</dbReference>
<dbReference type="HAMAP" id="MF_00045">
    <property type="entry name" value="Oligoribonuclease"/>
    <property type="match status" value="1"/>
</dbReference>
<dbReference type="InterPro" id="IPR013520">
    <property type="entry name" value="Exonuclease_RNaseT/DNA_pol3"/>
</dbReference>
<dbReference type="InterPro" id="IPR022894">
    <property type="entry name" value="Oligoribonuclease"/>
</dbReference>
<dbReference type="InterPro" id="IPR012337">
    <property type="entry name" value="RNaseH-like_sf"/>
</dbReference>
<dbReference type="InterPro" id="IPR036397">
    <property type="entry name" value="RNaseH_sf"/>
</dbReference>
<dbReference type="NCBIfam" id="NF003765">
    <property type="entry name" value="PRK05359.1"/>
    <property type="match status" value="1"/>
</dbReference>
<dbReference type="PANTHER" id="PTHR11046">
    <property type="entry name" value="OLIGORIBONUCLEASE, MITOCHONDRIAL"/>
    <property type="match status" value="1"/>
</dbReference>
<dbReference type="PANTHER" id="PTHR11046:SF0">
    <property type="entry name" value="OLIGORIBONUCLEASE, MITOCHONDRIAL"/>
    <property type="match status" value="1"/>
</dbReference>
<dbReference type="Pfam" id="PF00929">
    <property type="entry name" value="RNase_T"/>
    <property type="match status" value="1"/>
</dbReference>
<dbReference type="SMART" id="SM00479">
    <property type="entry name" value="EXOIII"/>
    <property type="match status" value="1"/>
</dbReference>
<dbReference type="SUPFAM" id="SSF53098">
    <property type="entry name" value="Ribonuclease H-like"/>
    <property type="match status" value="1"/>
</dbReference>
<organism>
    <name type="scientific">Vibrio parahaemolyticus serotype O3:K6 (strain RIMD 2210633)</name>
    <dbReference type="NCBI Taxonomy" id="223926"/>
    <lineage>
        <taxon>Bacteria</taxon>
        <taxon>Pseudomonadati</taxon>
        <taxon>Pseudomonadota</taxon>
        <taxon>Gammaproteobacteria</taxon>
        <taxon>Vibrionales</taxon>
        <taxon>Vibrionaceae</taxon>
        <taxon>Vibrio</taxon>
    </lineage>
</organism>
<sequence length="181" mass="20942">MSFSDQNLIWVDLEMTGLDPETHKIIEIASIVTDSELNILAEGPVLAVHQPEEELAKMDDWCTNTHTASGLVERVRNSKISEQDAVAQTIEFLEKWVPKGVSPICGNSIGQDRRFLYKHMPELEEYFHYRYLDVSTLKELTRRWKPEVLDGFSKQGTHLALDDIRESIAELKYYRETIFKI</sequence>
<name>ORN_VIBPA</name>
<keyword id="KW-0963">Cytoplasm</keyword>
<keyword id="KW-0269">Exonuclease</keyword>
<keyword id="KW-0378">Hydrolase</keyword>
<keyword id="KW-0540">Nuclease</keyword>
<gene>
    <name evidence="1" type="primary">orn</name>
    <name type="ordered locus">VP2823</name>
</gene>
<comment type="function">
    <text evidence="1">3'-to-5' exoribonuclease specific for small oligoribonucleotides.</text>
</comment>
<comment type="subcellular location">
    <subcellularLocation>
        <location evidence="1">Cytoplasm</location>
    </subcellularLocation>
</comment>
<comment type="similarity">
    <text evidence="1">Belongs to the oligoribonuclease family.</text>
</comment>
<feature type="chain" id="PRO_0000111079" description="Oligoribonuclease">
    <location>
        <begin position="1"/>
        <end position="181"/>
    </location>
</feature>
<feature type="domain" description="Exonuclease" evidence="1">
    <location>
        <begin position="8"/>
        <end position="171"/>
    </location>
</feature>
<feature type="active site" evidence="1">
    <location>
        <position position="129"/>
    </location>
</feature>
<evidence type="ECO:0000255" key="1">
    <source>
        <dbReference type="HAMAP-Rule" id="MF_00045"/>
    </source>
</evidence>